<dbReference type="EMBL" id="AF031607">
    <property type="protein sequence ID" value="AAC72541.1"/>
    <property type="molecule type" value="Genomic_DNA"/>
</dbReference>
<dbReference type="EMBL" id="AF060248">
    <property type="protein sequence ID" value="AAC97106.1"/>
    <property type="molecule type" value="Genomic_DNA"/>
</dbReference>
<dbReference type="EMBL" id="AL080282">
    <property type="protein sequence ID" value="CAB45885.1"/>
    <property type="status" value="ALT_SEQ"/>
    <property type="molecule type" value="Genomic_DNA"/>
</dbReference>
<dbReference type="EMBL" id="AL161553">
    <property type="protein sequence ID" value="CAB79090.1"/>
    <property type="status" value="ALT_SEQ"/>
    <property type="molecule type" value="Genomic_DNA"/>
</dbReference>
<dbReference type="EMBL" id="CP002687">
    <property type="protein sequence ID" value="AEE84373.1"/>
    <property type="status" value="ALT_SEQ"/>
    <property type="molecule type" value="Genomic_DNA"/>
</dbReference>
<dbReference type="EMBL" id="CP002687">
    <property type="protein sequence ID" value="ANM66435.1"/>
    <property type="molecule type" value="Genomic_DNA"/>
</dbReference>
<dbReference type="PIR" id="T10632">
    <property type="entry name" value="T10632"/>
</dbReference>
<dbReference type="RefSeq" id="NP_001328331.1">
    <property type="nucleotide sequence ID" value="NM_001341460.1"/>
</dbReference>
<dbReference type="RefSeq" id="NP_193822.1">
    <property type="nucleotide sequence ID" value="NM_118208.1"/>
</dbReference>
<dbReference type="SMR" id="Q9SUC3"/>
<dbReference type="STRING" id="3702.Q9SUC3"/>
<dbReference type="iPTMnet" id="Q9SUC3"/>
<dbReference type="PaxDb" id="3702-AT4G20900.1"/>
<dbReference type="EnsemblPlants" id="AT4G20900.2">
    <property type="protein sequence ID" value="AT4G20900.2"/>
    <property type="gene ID" value="AT4G20900"/>
</dbReference>
<dbReference type="GeneID" id="827838"/>
<dbReference type="Gramene" id="AT4G20900.2">
    <property type="protein sequence ID" value="AT4G20900.2"/>
    <property type="gene ID" value="AT4G20900"/>
</dbReference>
<dbReference type="KEGG" id="ath:AT4G20900"/>
<dbReference type="Araport" id="AT4G20900"/>
<dbReference type="TAIR" id="AT4G20900">
    <property type="gene designation" value="MS5"/>
</dbReference>
<dbReference type="eggNOG" id="ENOG502QQBN">
    <property type="taxonomic scope" value="Eukaryota"/>
</dbReference>
<dbReference type="HOGENOM" id="CLU_013792_0_0_1"/>
<dbReference type="InParanoid" id="Q9SUC3"/>
<dbReference type="CD-CODE" id="60F64496">
    <property type="entry name" value="P-body"/>
</dbReference>
<dbReference type="PRO" id="PR:Q9SUC3"/>
<dbReference type="Proteomes" id="UP000006548">
    <property type="component" value="Chromosome 4"/>
</dbReference>
<dbReference type="ExpressionAtlas" id="Q9SUC3">
    <property type="expression patterns" value="baseline and differential"/>
</dbReference>
<dbReference type="GO" id="GO:0005634">
    <property type="term" value="C:nucleus"/>
    <property type="evidence" value="ECO:0000250"/>
    <property type="project" value="TAIR"/>
</dbReference>
<dbReference type="GO" id="GO:0051301">
    <property type="term" value="P:cell division"/>
    <property type="evidence" value="ECO:0007669"/>
    <property type="project" value="UniProtKB-KW"/>
</dbReference>
<dbReference type="GO" id="GO:0007140">
    <property type="term" value="P:male meiotic nuclear division"/>
    <property type="evidence" value="ECO:0000315"/>
    <property type="project" value="UniProtKB"/>
</dbReference>
<dbReference type="GO" id="GO:0051321">
    <property type="term" value="P:meiotic cell cycle"/>
    <property type="evidence" value="ECO:0000315"/>
    <property type="project" value="UniProtKB"/>
</dbReference>
<dbReference type="GO" id="GO:0009556">
    <property type="term" value="P:microsporogenesis"/>
    <property type="evidence" value="ECO:0000315"/>
    <property type="project" value="UniProtKB"/>
</dbReference>
<dbReference type="Gene3D" id="1.25.40.10">
    <property type="entry name" value="Tetratricopeptide repeat domain"/>
    <property type="match status" value="1"/>
</dbReference>
<dbReference type="InterPro" id="IPR044961">
    <property type="entry name" value="MS5/SDI1"/>
</dbReference>
<dbReference type="InterPro" id="IPR011990">
    <property type="entry name" value="TPR-like_helical_dom_sf"/>
</dbReference>
<dbReference type="InterPro" id="IPR019734">
    <property type="entry name" value="TPR_rpt"/>
</dbReference>
<dbReference type="PANTHER" id="PTHR36326:SF10">
    <property type="entry name" value="PROTEIN POLLENLESS 3"/>
    <property type="match status" value="1"/>
</dbReference>
<dbReference type="PANTHER" id="PTHR36326">
    <property type="entry name" value="PROTEIN POLLENLESS 3-LIKE 2"/>
    <property type="match status" value="1"/>
</dbReference>
<dbReference type="SMART" id="SM00028">
    <property type="entry name" value="TPR"/>
    <property type="match status" value="1"/>
</dbReference>
<dbReference type="SUPFAM" id="SSF48452">
    <property type="entry name" value="TPR-like"/>
    <property type="match status" value="1"/>
</dbReference>
<dbReference type="PROSITE" id="PS50005">
    <property type="entry name" value="TPR"/>
    <property type="match status" value="1"/>
</dbReference>
<dbReference type="PROSITE" id="PS50293">
    <property type="entry name" value="TPR_REGION"/>
    <property type="match status" value="1"/>
</dbReference>
<comment type="function">
    <text evidence="4 5 6 7">Essential for male fertility, especially for microspore and pollen grain production (PubMed:9750346, Ref.2). Involved in the regulation of cell division after male meiosis I and II to facilitate exit from meiosis and transition to G1 (PubMed:21119056, PubMed:9451956).</text>
</comment>
<comment type="subcellular location">
    <subcellularLocation>
        <location evidence="9">Nucleus</location>
    </subcellularLocation>
</comment>
<comment type="tissue specificity">
    <text evidence="6 7">Expressed at low levels mostly in floral organs during meiosis. Also barely detectable in leaves, stems and roots.</text>
</comment>
<comment type="developmental stage">
    <text evidence="7">Specifically localized within meiotic cells in the anther locules, transiently, only during late meiosis.</text>
</comment>
<comment type="disruption phenotype">
    <text evidence="4 5 6 7">Sterile plants with abnormal formation of polyads during microsporogenesis, tetrads with more than four pools of chromosomes, after male meiosis, due to an unusual and abnormal cell division without further DNA or chromosome replication after meiosis I and II, and leading to collapsed pollen in flattened anthers (PubMed:9750346, Ref.2). Chromatin recondensation and stretching after meiosis II characterized by a dense microtubule network connecting haploid nuclei in the tetrad stage rearranged into four bipolar spindles as chromatids recondense, as if haploid nuclei entered a third meiotic division (PubMed:21119056, PubMed:9451956).</text>
</comment>
<comment type="similarity">
    <text evidence="12 13">Belongs to the MS5 protein family.</text>
</comment>
<comment type="sequence caution" evidence="11">
    <conflict type="erroneous gene model prediction">
        <sequence resource="EMBL-CDS" id="AEE84373"/>
    </conflict>
</comment>
<comment type="sequence caution" evidence="11">
    <conflict type="erroneous gene model prediction">
        <sequence resource="EMBL-CDS" id="CAB45885"/>
    </conflict>
</comment>
<comment type="sequence caution" evidence="11">
    <conflict type="erroneous gene model prediction">
        <sequence resource="EMBL-CDS" id="CAB79090"/>
    </conflict>
</comment>
<keyword id="KW-0131">Cell cycle</keyword>
<keyword id="KW-0132">Cell division</keyword>
<keyword id="KW-0175">Coiled coil</keyword>
<keyword id="KW-0217">Developmental protein</keyword>
<keyword id="KW-0469">Meiosis</keyword>
<keyword id="KW-0539">Nucleus</keyword>
<keyword id="KW-1185">Reference proteome</keyword>
<keyword id="KW-0677">Repeat</keyword>
<keyword id="KW-0802">TPR repeat</keyword>
<evidence type="ECO:0000255" key="1"/>
<evidence type="ECO:0000255" key="2">
    <source>
        <dbReference type="PROSITE-ProRule" id="PRU00339"/>
    </source>
</evidence>
<evidence type="ECO:0000256" key="3">
    <source>
        <dbReference type="SAM" id="MobiDB-lite"/>
    </source>
</evidence>
<evidence type="ECO:0000269" key="4">
    <source>
    </source>
</evidence>
<evidence type="ECO:0000269" key="5">
    <source>
    </source>
</evidence>
<evidence type="ECO:0000269" key="6">
    <source>
    </source>
</evidence>
<evidence type="ECO:0000269" key="7">
    <source ref="2"/>
</evidence>
<evidence type="ECO:0000303" key="8">
    <source>
    </source>
</evidence>
<evidence type="ECO:0000303" key="9">
    <source>
    </source>
</evidence>
<evidence type="ECO:0000303" key="10">
    <source ref="2"/>
</evidence>
<evidence type="ECO:0000305" key="11"/>
<evidence type="ECO:0000305" key="12">
    <source>
    </source>
</evidence>
<evidence type="ECO:0000305" key="13">
    <source ref="2"/>
</evidence>
<evidence type="ECO:0000312" key="14">
    <source>
        <dbReference type="Araport" id="AT4G20900"/>
    </source>
</evidence>
<evidence type="ECO:0000312" key="15">
    <source>
        <dbReference type="EMBL" id="CAB45885.1"/>
    </source>
</evidence>
<feature type="chain" id="PRO_0000430653" description="Protein POLLENLESS 3">
    <location>
        <begin position="1"/>
        <end position="434"/>
    </location>
</feature>
<feature type="repeat" description="TPR 1" evidence="2">
    <location>
        <begin position="95"/>
        <end position="131"/>
    </location>
</feature>
<feature type="repeat" description="TPR 2" evidence="2">
    <location>
        <begin position="133"/>
        <end position="164"/>
    </location>
</feature>
<feature type="repeat" description="TPR 3" evidence="2">
    <location>
        <begin position="191"/>
        <end position="224"/>
    </location>
</feature>
<feature type="repeat" description="TPR 4" evidence="2">
    <location>
        <begin position="241"/>
        <end position="274"/>
    </location>
</feature>
<feature type="region of interest" description="Disordered" evidence="3">
    <location>
        <begin position="13"/>
        <end position="47"/>
    </location>
</feature>
<feature type="region of interest" description="Disordered" evidence="3">
    <location>
        <begin position="309"/>
        <end position="329"/>
    </location>
</feature>
<feature type="region of interest" description="Disordered" evidence="3">
    <location>
        <begin position="393"/>
        <end position="434"/>
    </location>
</feature>
<feature type="coiled-coil region" evidence="1">
    <location>
        <begin position="142"/>
        <end position="166"/>
    </location>
</feature>
<feature type="coiled-coil region" evidence="1">
    <location>
        <begin position="408"/>
        <end position="434"/>
    </location>
</feature>
<feature type="short sequence motif" description="Nuclear localization signal 1" evidence="9">
    <location>
        <begin position="34"/>
        <end position="37"/>
    </location>
</feature>
<feature type="short sequence motif" description="Nuclear localization signal 2" evidence="9">
    <location>
        <begin position="377"/>
        <end position="380"/>
    </location>
</feature>
<feature type="compositionally biased region" description="Polar residues" evidence="3">
    <location>
        <begin position="310"/>
        <end position="326"/>
    </location>
</feature>
<feature type="compositionally biased region" description="Basic and acidic residues" evidence="3">
    <location>
        <begin position="393"/>
        <end position="408"/>
    </location>
</feature>
<feature type="compositionally biased region" description="Acidic residues" evidence="3">
    <location>
        <begin position="411"/>
        <end position="423"/>
    </location>
</feature>
<feature type="compositionally biased region" description="Basic and acidic residues" evidence="3">
    <location>
        <begin position="424"/>
        <end position="434"/>
    </location>
</feature>
<feature type="sequence conflict" description="In Ref. 1; AAC72541." ref="1">
    <original>H</original>
    <variation>D</variation>
    <location>
        <position position="25"/>
    </location>
</feature>
<feature type="sequence conflict" description="In Ref. 2; AAC97106." ref="2">
    <original>DI</original>
    <variation>NF</variation>
    <location>
        <begin position="410"/>
        <end position="411"/>
    </location>
</feature>
<reference key="1">
    <citation type="journal article" date="1998" name="Plant J.">
        <title>Cloning and characterization of MS5 from Arabidopsis: a gene critical in male meiosis.</title>
        <authorList>
            <person name="Glover J."/>
            <person name="Grelon M."/>
            <person name="Craig S."/>
            <person name="Chaudhury A."/>
            <person name="Dennis E."/>
        </authorList>
    </citation>
    <scope>NUCLEOTIDE SEQUENCE [GENOMIC DNA]</scope>
    <scope>FUNCTION</scope>
    <scope>DISRUPTION PHENOTYPE</scope>
    <scope>SUBCELLULAR LOCATION</scope>
    <scope>TISSUE SPECIFICITY</scope>
    <source>
        <strain>cv. Wassilewskija</strain>
    </source>
</reference>
<reference key="2">
    <citation type="journal article" date="1999" name="Sex. Plant Reprod.">
        <title>Anther developmental defects in Arabidopsis thaliana male-sterile mutants.</title>
        <authorList>
            <person name="Sanders P.M."/>
            <person name="Bui A.Q."/>
            <person name="Weterings K."/>
            <person name="McIntire K.N."/>
            <person name="Hsu Y.-C."/>
            <person name="Lee P.Y."/>
            <person name="Truong M.T."/>
            <person name="Beals T.B."/>
            <person name="Goldberg R.B."/>
        </authorList>
    </citation>
    <scope>NUCLEOTIDE SEQUENCE [GENOMIC DNA]</scope>
    <scope>FUNCTION</scope>
    <scope>DISRUPTION PHENOTYPE</scope>
    <scope>TISSUE SPECIFICITY</scope>
    <scope>DEVELOPMENTAL STAGE</scope>
    <scope>GENE FAMILY</scope>
    <scope>NOMENCLATURE</scope>
    <source>
        <strain>cv. Landsberg erecta</strain>
        <strain>cv. Wassilewskija</strain>
    </source>
</reference>
<reference key="3">
    <citation type="journal article" date="1999" name="Nature">
        <title>Sequence and analysis of chromosome 4 of the plant Arabidopsis thaliana.</title>
        <authorList>
            <person name="Mayer K.F.X."/>
            <person name="Schueller C."/>
            <person name="Wambutt R."/>
            <person name="Murphy G."/>
            <person name="Volckaert G."/>
            <person name="Pohl T."/>
            <person name="Duesterhoeft A."/>
            <person name="Stiekema W."/>
            <person name="Entian K.-D."/>
            <person name="Terryn N."/>
            <person name="Harris B."/>
            <person name="Ansorge W."/>
            <person name="Brandt P."/>
            <person name="Grivell L.A."/>
            <person name="Rieger M."/>
            <person name="Weichselgartner M."/>
            <person name="de Simone V."/>
            <person name="Obermaier B."/>
            <person name="Mache R."/>
            <person name="Mueller M."/>
            <person name="Kreis M."/>
            <person name="Delseny M."/>
            <person name="Puigdomenech P."/>
            <person name="Watson M."/>
            <person name="Schmidtheini T."/>
            <person name="Reichert B."/>
            <person name="Portetelle D."/>
            <person name="Perez-Alonso M."/>
            <person name="Boutry M."/>
            <person name="Bancroft I."/>
            <person name="Vos P."/>
            <person name="Hoheisel J."/>
            <person name="Zimmermann W."/>
            <person name="Wedler H."/>
            <person name="Ridley P."/>
            <person name="Langham S.-A."/>
            <person name="McCullagh B."/>
            <person name="Bilham L."/>
            <person name="Robben J."/>
            <person name="van der Schueren J."/>
            <person name="Grymonprez B."/>
            <person name="Chuang Y.-J."/>
            <person name="Vandenbussche F."/>
            <person name="Braeken M."/>
            <person name="Weltjens I."/>
            <person name="Voet M."/>
            <person name="Bastiaens I."/>
            <person name="Aert R."/>
            <person name="Defoor E."/>
            <person name="Weitzenegger T."/>
            <person name="Bothe G."/>
            <person name="Ramsperger U."/>
            <person name="Hilbert H."/>
            <person name="Braun M."/>
            <person name="Holzer E."/>
            <person name="Brandt A."/>
            <person name="Peters S."/>
            <person name="van Staveren M."/>
            <person name="Dirkse W."/>
            <person name="Mooijman P."/>
            <person name="Klein Lankhorst R."/>
            <person name="Rose M."/>
            <person name="Hauf J."/>
            <person name="Koetter P."/>
            <person name="Berneiser S."/>
            <person name="Hempel S."/>
            <person name="Feldpausch M."/>
            <person name="Lamberth S."/>
            <person name="Van den Daele H."/>
            <person name="De Keyser A."/>
            <person name="Buysshaert C."/>
            <person name="Gielen J."/>
            <person name="Villarroel R."/>
            <person name="De Clercq R."/>
            <person name="van Montagu M."/>
            <person name="Rogers J."/>
            <person name="Cronin A."/>
            <person name="Quail M.A."/>
            <person name="Bray-Allen S."/>
            <person name="Clark L."/>
            <person name="Doggett J."/>
            <person name="Hall S."/>
            <person name="Kay M."/>
            <person name="Lennard N."/>
            <person name="McLay K."/>
            <person name="Mayes R."/>
            <person name="Pettett A."/>
            <person name="Rajandream M.A."/>
            <person name="Lyne M."/>
            <person name="Benes V."/>
            <person name="Rechmann S."/>
            <person name="Borkova D."/>
            <person name="Bloecker H."/>
            <person name="Scharfe M."/>
            <person name="Grimm M."/>
            <person name="Loehnert T.-H."/>
            <person name="Dose S."/>
            <person name="de Haan M."/>
            <person name="Maarse A.C."/>
            <person name="Schaefer M."/>
            <person name="Mueller-Auer S."/>
            <person name="Gabel C."/>
            <person name="Fuchs M."/>
            <person name="Fartmann B."/>
            <person name="Granderath K."/>
            <person name="Dauner D."/>
            <person name="Herzl A."/>
            <person name="Neumann S."/>
            <person name="Argiriou A."/>
            <person name="Vitale D."/>
            <person name="Liguori R."/>
            <person name="Piravandi E."/>
            <person name="Massenet O."/>
            <person name="Quigley F."/>
            <person name="Clabauld G."/>
            <person name="Muendlein A."/>
            <person name="Felber R."/>
            <person name="Schnabl S."/>
            <person name="Hiller R."/>
            <person name="Schmidt W."/>
            <person name="Lecharny A."/>
            <person name="Aubourg S."/>
            <person name="Chefdor F."/>
            <person name="Cooke R."/>
            <person name="Berger C."/>
            <person name="Monfort A."/>
            <person name="Casacuberta E."/>
            <person name="Gibbons T."/>
            <person name="Weber N."/>
            <person name="Vandenbol M."/>
            <person name="Bargues M."/>
            <person name="Terol J."/>
            <person name="Torres A."/>
            <person name="Perez-Perez A."/>
            <person name="Purnelle B."/>
            <person name="Bent E."/>
            <person name="Johnson S."/>
            <person name="Tacon D."/>
            <person name="Jesse T."/>
            <person name="Heijnen L."/>
            <person name="Schwarz S."/>
            <person name="Scholler P."/>
            <person name="Heber S."/>
            <person name="Francs P."/>
            <person name="Bielke C."/>
            <person name="Frishman D."/>
            <person name="Haase D."/>
            <person name="Lemcke K."/>
            <person name="Mewes H.-W."/>
            <person name="Stocker S."/>
            <person name="Zaccaria P."/>
            <person name="Bevan M."/>
            <person name="Wilson R.K."/>
            <person name="de la Bastide M."/>
            <person name="Habermann K."/>
            <person name="Parnell L."/>
            <person name="Dedhia N."/>
            <person name="Gnoj L."/>
            <person name="Schutz K."/>
            <person name="Huang E."/>
            <person name="Spiegel L."/>
            <person name="Sekhon M."/>
            <person name="Murray J."/>
            <person name="Sheet P."/>
            <person name="Cordes M."/>
            <person name="Abu-Threideh J."/>
            <person name="Stoneking T."/>
            <person name="Kalicki J."/>
            <person name="Graves T."/>
            <person name="Harmon G."/>
            <person name="Edwards J."/>
            <person name="Latreille P."/>
            <person name="Courtney L."/>
            <person name="Cloud J."/>
            <person name="Abbott A."/>
            <person name="Scott K."/>
            <person name="Johnson D."/>
            <person name="Minx P."/>
            <person name="Bentley D."/>
            <person name="Fulton B."/>
            <person name="Miller N."/>
            <person name="Greco T."/>
            <person name="Kemp K."/>
            <person name="Kramer J."/>
            <person name="Fulton L."/>
            <person name="Mardis E."/>
            <person name="Dante M."/>
            <person name="Pepin K."/>
            <person name="Hillier L.W."/>
            <person name="Nelson J."/>
            <person name="Spieth J."/>
            <person name="Ryan E."/>
            <person name="Andrews S."/>
            <person name="Geisel C."/>
            <person name="Layman D."/>
            <person name="Du H."/>
            <person name="Ali J."/>
            <person name="Berghoff A."/>
            <person name="Jones K."/>
            <person name="Drone K."/>
            <person name="Cotton M."/>
            <person name="Joshu C."/>
            <person name="Antonoiu B."/>
            <person name="Zidanic M."/>
            <person name="Strong C."/>
            <person name="Sun H."/>
            <person name="Lamar B."/>
            <person name="Yordan C."/>
            <person name="Ma P."/>
            <person name="Zhong J."/>
            <person name="Preston R."/>
            <person name="Vil D."/>
            <person name="Shekher M."/>
            <person name="Matero A."/>
            <person name="Shah R."/>
            <person name="Swaby I.K."/>
            <person name="O'Shaughnessy A."/>
            <person name="Rodriguez M."/>
            <person name="Hoffman J."/>
            <person name="Till S."/>
            <person name="Granat S."/>
            <person name="Shohdy N."/>
            <person name="Hasegawa A."/>
            <person name="Hameed A."/>
            <person name="Lodhi M."/>
            <person name="Johnson A."/>
            <person name="Chen E."/>
            <person name="Marra M.A."/>
            <person name="Martienssen R."/>
            <person name="McCombie W.R."/>
        </authorList>
    </citation>
    <scope>NUCLEOTIDE SEQUENCE [LARGE SCALE GENOMIC DNA]</scope>
    <source>
        <strain>cv. Columbia</strain>
    </source>
</reference>
<reference key="4">
    <citation type="journal article" date="2017" name="Plant J.">
        <title>Araport11: a complete reannotation of the Arabidopsis thaliana reference genome.</title>
        <authorList>
            <person name="Cheng C.Y."/>
            <person name="Krishnakumar V."/>
            <person name="Chan A.P."/>
            <person name="Thibaud-Nissen F."/>
            <person name="Schobel S."/>
            <person name="Town C.D."/>
        </authorList>
    </citation>
    <scope>GENOME REANNOTATION</scope>
    <source>
        <strain>cv. Columbia</strain>
    </source>
</reference>
<reference key="5">
    <citation type="journal article" date="1997" name="Chromosome Res.">
        <title>Cytological characterization of four meiotic mutants of Arabidopsis isolated from T-DNA-transformed lines.</title>
        <authorList>
            <person name="Ross K.J."/>
            <person name="Fransz P."/>
            <person name="Armstrong S.J."/>
            <person name="Vizir I."/>
            <person name="Mulligan B."/>
            <person name="Franklin F.C."/>
            <person name="Jones G.H."/>
        </authorList>
    </citation>
    <scope>FUNCTION</scope>
    <scope>DISRUPTION PHENOTYPE</scope>
</reference>
<reference key="6">
    <citation type="journal article" date="2000" name="Curr. Opin. Plant Biol.">
        <title>Genetics of gametophyte biogenesis in Arabidopsis.</title>
        <authorList>
            <person name="Yang W.C."/>
            <person name="Sundaresan V."/>
        </authorList>
    </citation>
    <scope>REVIEW</scope>
</reference>
<reference key="7">
    <citation type="journal article" date="2010" name="Plant Cell">
        <title>Meiotic progression in Arabidopsis is governed by complex regulatory interactions between SMG7, TDM1, and the meiosis I-specific cyclin TAM.</title>
        <authorList>
            <person name="Bulankova P."/>
            <person name="Riehs-Kearnan N."/>
            <person name="Nowack M.K."/>
            <person name="Schnittger A."/>
            <person name="Riha K."/>
        </authorList>
    </citation>
    <scope>FUNCTION</scope>
    <scope>DISRUPTION PHENOTYPE</scope>
</reference>
<proteinExistence type="evidence at transcript level"/>
<name>MS5_ARATH</name>
<protein>
    <recommendedName>
        <fullName evidence="10">Protein POLLENLESS 3</fullName>
    </recommendedName>
    <alternativeName>
        <fullName evidence="9">Protein MALE STERILE 5</fullName>
    </alternativeName>
    <alternativeName>
        <fullName evidence="8">Protein THREE-DIVISION MUTANT 1</fullName>
    </alternativeName>
</protein>
<sequence>MCPCVERRAPPGVYYTPPPARTSDHVAAMPMTERRRPPYSCSSSSERRDPFHIVHKVPSGDSPYVRAKHAQLIDKDPNRAISLFWTAINAGDRVDSALKDMAVVMKQLGRSDEGIEAIKSFRYLCSFESQDSIDNLLLELYKKSGRIEEEAVLLEHKLQTLEQGMGFGGRVSRAKRVQGKHVIMTIEQEKARILGNLGWVHLQLHNYGIAEQHYRRALGLERDKNKLCNLAICLMRMSRIPEAKSLLDDVRDSPAESECGDEPFAKSYDRAVEMLAEIESKKPEADLSEKFYAGCSFVNRMKENIAPGTANKNYSDVSSSPASVRPNSAGLYTQPRRCRLFEEETRGAARKLLFGKPQPFGSEQMKILERGEEEPMKRKKLDQNMIQYLHEFVKDTADGPKSESKKSWADIAEEEEAEEEEEERLQGELKTAEM</sequence>
<gene>
    <name evidence="9" type="primary">MS5</name>
    <name evidence="8" type="synonym">TDM1</name>
    <name evidence="14" type="ordered locus">At4g20900</name>
    <name evidence="15" type="ORF">T13K14.60</name>
</gene>
<accession>Q9SUC3</accession>
<accession>O65310</accession>
<accession>Q9SBJ5</accession>
<organism>
    <name type="scientific">Arabidopsis thaliana</name>
    <name type="common">Mouse-ear cress</name>
    <dbReference type="NCBI Taxonomy" id="3702"/>
    <lineage>
        <taxon>Eukaryota</taxon>
        <taxon>Viridiplantae</taxon>
        <taxon>Streptophyta</taxon>
        <taxon>Embryophyta</taxon>
        <taxon>Tracheophyta</taxon>
        <taxon>Spermatophyta</taxon>
        <taxon>Magnoliopsida</taxon>
        <taxon>eudicotyledons</taxon>
        <taxon>Gunneridae</taxon>
        <taxon>Pentapetalae</taxon>
        <taxon>rosids</taxon>
        <taxon>malvids</taxon>
        <taxon>Brassicales</taxon>
        <taxon>Brassicaceae</taxon>
        <taxon>Camelineae</taxon>
        <taxon>Arabidopsis</taxon>
    </lineage>
</organism>